<keyword id="KW-0930">Antiviral protein</keyword>
<keyword id="KW-0903">Direct protein sequencing</keyword>
<keyword id="KW-1015">Disulfide bond</keyword>
<keyword id="KW-0960">Knottin</keyword>
<keyword id="KW-0611">Plant defense</keyword>
<reference evidence="4" key="1">
    <citation type="journal article" date="2000" name="J. Nat. Prod.">
        <title>New circulin macrocyclic polypeptides from Chassalia parvifolia.</title>
        <authorList>
            <person name="Gustafson K.R."/>
            <person name="Walton L.K."/>
            <person name="Sowder R.C. Jr."/>
            <person name="Johnson D.G."/>
            <person name="Pannell L.K."/>
            <person name="Cardellina J.H. Jr."/>
            <person name="Boyd M.R."/>
        </authorList>
    </citation>
    <scope>PROTEIN SEQUENCE</scope>
    <scope>FUNCTION</scope>
    <scope>MASS SPECTROMETRY</scope>
    <source>
        <tissue evidence="3">Stem</tissue>
    </source>
</reference>
<proteinExistence type="evidence at protein level"/>
<protein>
    <recommendedName>
        <fullName>Circulin-C</fullName>
        <shortName>CIRC</shortName>
    </recommendedName>
</protein>
<feature type="peptide" id="PRO_0000043600" description="Circulin-C" evidence="2 3">
    <location>
        <begin position="1"/>
        <end position="30"/>
    </location>
</feature>
<feature type="disulfide bond" evidence="1 2">
    <location>
        <begin position="4"/>
        <end position="20"/>
    </location>
</feature>
<feature type="disulfide bond" evidence="1 2">
    <location>
        <begin position="8"/>
        <end position="22"/>
    </location>
</feature>
<feature type="disulfide bond" evidence="1 2">
    <location>
        <begin position="13"/>
        <end position="27"/>
    </location>
</feature>
<feature type="cross-link" description="Cyclopeptide (Gly-Asn)" evidence="3">
    <location>
        <begin position="1"/>
        <end position="30"/>
    </location>
</feature>
<sequence length="30" mass="3126">GIPCGESCVFIPCITSVAGCSCKSKVCYRN</sequence>
<name>CIRC_CHAPA</name>
<evidence type="ECO:0000250" key="1">
    <source>
        <dbReference type="UniProtKB" id="P56871"/>
    </source>
</evidence>
<evidence type="ECO:0000255" key="2">
    <source>
        <dbReference type="PROSITE-ProRule" id="PRU00395"/>
    </source>
</evidence>
<evidence type="ECO:0000269" key="3">
    <source>
    </source>
</evidence>
<evidence type="ECO:0000305" key="4"/>
<dbReference type="SMR" id="P84641"/>
<dbReference type="GO" id="GO:0006952">
    <property type="term" value="P:defense response"/>
    <property type="evidence" value="ECO:0000314"/>
    <property type="project" value="UniProtKB"/>
</dbReference>
<dbReference type="GO" id="GO:0050688">
    <property type="term" value="P:regulation of defense response to virus"/>
    <property type="evidence" value="ECO:0007669"/>
    <property type="project" value="UniProtKB-KW"/>
</dbReference>
<dbReference type="InterPro" id="IPR005535">
    <property type="entry name" value="Cyclotide"/>
</dbReference>
<dbReference type="InterPro" id="IPR012323">
    <property type="entry name" value="Cyclotide_bracelet_CS"/>
</dbReference>
<dbReference type="InterPro" id="IPR036146">
    <property type="entry name" value="Cyclotide_sf"/>
</dbReference>
<dbReference type="Pfam" id="PF03784">
    <property type="entry name" value="Cyclotide"/>
    <property type="match status" value="1"/>
</dbReference>
<dbReference type="PIRSF" id="PIRSF037891">
    <property type="entry name" value="Cycloviolacin"/>
    <property type="match status" value="1"/>
</dbReference>
<dbReference type="SUPFAM" id="SSF57038">
    <property type="entry name" value="Cyclotides"/>
    <property type="match status" value="1"/>
</dbReference>
<dbReference type="PROSITE" id="PS51052">
    <property type="entry name" value="CYCLOTIDE"/>
    <property type="match status" value="1"/>
</dbReference>
<dbReference type="PROSITE" id="PS60008">
    <property type="entry name" value="CYCLOTIDE_BRACELET"/>
    <property type="match status" value="1"/>
</dbReference>
<accession>P84641</accession>
<comment type="function">
    <text evidence="2 3 4">Probably participates in a plant defense mechanism. Inhibits the cytopathic effects of the human immunodeficiency virus.</text>
</comment>
<comment type="domain">
    <text evidence="1">The presence of a 'disulfide through disulfide knot' structurally defines this protein as a knottin.</text>
</comment>
<comment type="PTM">
    <text evidence="2 3">This is a cyclic peptide.</text>
</comment>
<comment type="mass spectrometry" mass="3102.3" method="FAB" evidence="3"/>
<comment type="similarity">
    <text evidence="2">Belongs to the cyclotide family. Bracelet subfamily.</text>
</comment>
<comment type="caution">
    <text evidence="4">This peptide is cyclic. The start position was chosen by similarity to OAK1 (kalata-B1) for which the DNA sequence is known.</text>
</comment>
<organism>
    <name type="scientific">Chassalia parviflora</name>
    <dbReference type="NCBI Taxonomy" id="58431"/>
    <lineage>
        <taxon>Eukaryota</taxon>
        <taxon>Viridiplantae</taxon>
        <taxon>Streptophyta</taxon>
        <taxon>Embryophyta</taxon>
        <taxon>Tracheophyta</taxon>
        <taxon>Spermatophyta</taxon>
        <taxon>Magnoliopsida</taxon>
        <taxon>eudicotyledons</taxon>
        <taxon>Gunneridae</taxon>
        <taxon>Pentapetalae</taxon>
        <taxon>asterids</taxon>
        <taxon>lamiids</taxon>
        <taxon>Gentianales</taxon>
        <taxon>Rubiaceae</taxon>
        <taxon>Rubioideae</taxon>
        <taxon>Palicoureeae</taxon>
        <taxon>Chassalia</taxon>
    </lineage>
</organism>